<feature type="chain" id="PRO_0000174393" description="Uncharacterized protein BB_0340">
    <location>
        <begin position="1"/>
        <end position="269"/>
    </location>
</feature>
<gene>
    <name type="ordered locus">BB_0340</name>
</gene>
<organism>
    <name type="scientific">Borreliella burgdorferi (strain ATCC 35210 / DSM 4680 / CIP 102532 / B31)</name>
    <name type="common">Borrelia burgdorferi</name>
    <dbReference type="NCBI Taxonomy" id="224326"/>
    <lineage>
        <taxon>Bacteria</taxon>
        <taxon>Pseudomonadati</taxon>
        <taxon>Spirochaetota</taxon>
        <taxon>Spirochaetia</taxon>
        <taxon>Spirochaetales</taxon>
        <taxon>Borreliaceae</taxon>
        <taxon>Borreliella</taxon>
    </lineage>
</organism>
<reference key="1">
    <citation type="journal article" date="1997" name="Nature">
        <title>Genomic sequence of a Lyme disease spirochaete, Borrelia burgdorferi.</title>
        <authorList>
            <person name="Fraser C.M."/>
            <person name="Casjens S."/>
            <person name="Huang W.M."/>
            <person name="Sutton G.G."/>
            <person name="Clayton R.A."/>
            <person name="Lathigra R."/>
            <person name="White O."/>
            <person name="Ketchum K.A."/>
            <person name="Dodson R.J."/>
            <person name="Hickey E.K."/>
            <person name="Gwinn M.L."/>
            <person name="Dougherty B.A."/>
            <person name="Tomb J.-F."/>
            <person name="Fleischmann R.D."/>
            <person name="Richardson D.L."/>
            <person name="Peterson J.D."/>
            <person name="Kerlavage A.R."/>
            <person name="Quackenbush J."/>
            <person name="Salzberg S.L."/>
            <person name="Hanson M."/>
            <person name="van Vugt R."/>
            <person name="Palmer N."/>
            <person name="Adams M.D."/>
            <person name="Gocayne J.D."/>
            <person name="Weidman J.F."/>
            <person name="Utterback T.R."/>
            <person name="Watthey L."/>
            <person name="McDonald L.A."/>
            <person name="Artiach P."/>
            <person name="Bowman C."/>
            <person name="Garland S.A."/>
            <person name="Fujii C."/>
            <person name="Cotton M.D."/>
            <person name="Horst K."/>
            <person name="Roberts K.M."/>
            <person name="Hatch B."/>
            <person name="Smith H.O."/>
            <person name="Venter J.C."/>
        </authorList>
    </citation>
    <scope>NUCLEOTIDE SEQUENCE [LARGE SCALE GENOMIC DNA]</scope>
    <source>
        <strain>ATCC 35210 / DSM 4680 / CIP 102532 / B31</strain>
    </source>
</reference>
<proteinExistence type="predicted"/>
<dbReference type="EMBL" id="AE000783">
    <property type="protein sequence ID" value="AAC66727.1"/>
    <property type="molecule type" value="Genomic_DNA"/>
</dbReference>
<dbReference type="PIR" id="C70142">
    <property type="entry name" value="C70142"/>
</dbReference>
<dbReference type="RefSeq" id="NP_212474.1">
    <property type="nucleotide sequence ID" value="NC_001318.1"/>
</dbReference>
<dbReference type="RefSeq" id="WP_002664835.1">
    <property type="nucleotide sequence ID" value="NC_001318.1"/>
</dbReference>
<dbReference type="SMR" id="O51315"/>
<dbReference type="STRING" id="224326.BB_0340"/>
<dbReference type="PaxDb" id="224326-BB_0340"/>
<dbReference type="EnsemblBacteria" id="AAC66727">
    <property type="protein sequence ID" value="AAC66727"/>
    <property type="gene ID" value="BB_0340"/>
</dbReference>
<dbReference type="KEGG" id="bbu:BB_0340"/>
<dbReference type="PATRIC" id="fig|224326.49.peg.736"/>
<dbReference type="HOGENOM" id="CLU_082735_0_0_12"/>
<dbReference type="OrthoDB" id="356614at2"/>
<dbReference type="Proteomes" id="UP000001807">
    <property type="component" value="Chromosome"/>
</dbReference>
<dbReference type="Gene3D" id="3.90.1150.10">
    <property type="entry name" value="Aspartate Aminotransferase, domain 1"/>
    <property type="match status" value="1"/>
</dbReference>
<dbReference type="InterPro" id="IPR015424">
    <property type="entry name" value="PyrdxlP-dep_Trfase"/>
</dbReference>
<dbReference type="InterPro" id="IPR015422">
    <property type="entry name" value="PyrdxlP-dep_Trfase_small"/>
</dbReference>
<dbReference type="SUPFAM" id="SSF53383">
    <property type="entry name" value="PLP-dependent transferases"/>
    <property type="match status" value="1"/>
</dbReference>
<keyword id="KW-1185">Reference proteome</keyword>
<evidence type="ECO:0000305" key="1"/>
<name>Y340_BORBU</name>
<comment type="similarity">
    <text evidence="1">To T.pallidum TP0678.</text>
</comment>
<accession>O51315</accession>
<protein>
    <recommendedName>
        <fullName>Uncharacterized protein BB_0340</fullName>
    </recommendedName>
</protein>
<sequence>MYDLPLIDNLPVIKRARFFYLYDIHGKRYLDLYLNGGRNFLGYRVQGLNRLFKQTMSRGLISPYPSVFKNQFINLVFTFFKEAGSVYIFKLEKDAKEFLLSLTGKNKFFMPWEKEEGIYEFRVGFSNIKYPMIFNIPLPDFMSVSIVVMDNLSRKIEFKDNFDAVTLSLARHTLSKLLFYKKNIDIDFNSFATPLFRIADRYMLPLYDACYHAEIFNEFLKFGYLISPNFSIPSIVPLKFSKGDLDNFKKLCFALKNKFIDGLDSDPYK</sequence>